<accession>B1LHX5</accession>
<gene>
    <name evidence="1" type="primary">nhaP2</name>
    <name type="synonym">cvrA</name>
    <name type="ordered locus">EcSMS35_1957</name>
</gene>
<evidence type="ECO:0000255" key="1">
    <source>
        <dbReference type="HAMAP-Rule" id="MF_01075"/>
    </source>
</evidence>
<reference key="1">
    <citation type="journal article" date="2008" name="J. Bacteriol.">
        <title>Insights into the environmental resistance gene pool from the genome sequence of the multidrug-resistant environmental isolate Escherichia coli SMS-3-5.</title>
        <authorList>
            <person name="Fricke W.F."/>
            <person name="Wright M.S."/>
            <person name="Lindell A.H."/>
            <person name="Harkins D.M."/>
            <person name="Baker-Austin C."/>
            <person name="Ravel J."/>
            <person name="Stepanauskas R."/>
        </authorList>
    </citation>
    <scope>NUCLEOTIDE SEQUENCE [LARGE SCALE GENOMIC DNA]</scope>
    <source>
        <strain>SMS-3-5 / SECEC</strain>
    </source>
</reference>
<feature type="chain" id="PRO_1000136705" description="K(+)/H(+) antiporter NhaP2">
    <location>
        <begin position="1"/>
        <end position="578"/>
    </location>
</feature>
<feature type="transmembrane region" description="Helical" evidence="1">
    <location>
        <begin position="6"/>
        <end position="26"/>
    </location>
</feature>
<feature type="transmembrane region" description="Helical" evidence="1">
    <location>
        <begin position="30"/>
        <end position="50"/>
    </location>
</feature>
<feature type="transmembrane region" description="Helical" evidence="1">
    <location>
        <begin position="58"/>
        <end position="78"/>
    </location>
</feature>
<feature type="transmembrane region" description="Helical" evidence="1">
    <location>
        <begin position="87"/>
        <end position="107"/>
    </location>
</feature>
<feature type="transmembrane region" description="Helical" evidence="1">
    <location>
        <begin position="109"/>
        <end position="129"/>
    </location>
</feature>
<feature type="transmembrane region" description="Helical" evidence="1">
    <location>
        <begin position="156"/>
        <end position="176"/>
    </location>
</feature>
<feature type="transmembrane region" description="Helical" evidence="1">
    <location>
        <begin position="185"/>
        <end position="205"/>
    </location>
</feature>
<feature type="transmembrane region" description="Helical" evidence="1">
    <location>
        <begin position="216"/>
        <end position="236"/>
    </location>
</feature>
<feature type="transmembrane region" description="Helical" evidence="1">
    <location>
        <begin position="237"/>
        <end position="257"/>
    </location>
</feature>
<feature type="transmembrane region" description="Helical" evidence="1">
    <location>
        <begin position="270"/>
        <end position="290"/>
    </location>
</feature>
<feature type="transmembrane region" description="Helical" evidence="1">
    <location>
        <begin position="293"/>
        <end position="313"/>
    </location>
</feature>
<feature type="transmembrane region" description="Helical" evidence="1">
    <location>
        <begin position="334"/>
        <end position="354"/>
    </location>
</feature>
<feature type="transmembrane region" description="Helical" evidence="1">
    <location>
        <begin position="363"/>
        <end position="383"/>
    </location>
</feature>
<feature type="domain" description="RCK C-terminal" evidence="1">
    <location>
        <begin position="403"/>
        <end position="485"/>
    </location>
</feature>
<proteinExistence type="inferred from homology"/>
<sequence length="578" mass="62205">MDATTIISLFILGSILVTSSILLSSFSSRLGIPILVIFLAIGMLAGVDGVGGIPFDNYPFAYMVSNLALAIILLDGGMRTQASSFRVALGPALSLATLGVLITSGLTGMMAAWLFNLDLIEGLLIGAIVGSTDAAAVFSLLGGKGLNERVGSTLEIESGSNDPMAVFLTITLIAMIQQHESSVSWMFVVDILQQFGLGIVIGLGGGYLLLQMINRIALPAGLYPLLALSGGILIFALTTALEGSGILAVYLCGFLLGNRPIRNRYGILQNFDGLAWLAQIAMFLVLGLLVNPSDLLPIAIPALILSAWMIFFARPLSVFAGLLPFRGFNLRERVFISWVGLRGAVPIILAVFPMMAGLENARLFFNVAFFVVLVSLLLQGTSLSWAAKKAKVVVPPVGRPVSRVGLDIHPENPWEQFVYQLSADKWCVGAALRDLHMPKETRIAALFRDNQLLHPTGSTRLREGDVLCVIGRERDLPALGKLFSQSPPVALDQRFFGDFILEASAKYADVALIYGLEDGREYRDKQQTLGEIVQQLLGAAPVVGDQVEFAGMIWTVAEKEDNEVLKIGVRVAEEEAES</sequence>
<name>NHAP2_ECOSM</name>
<keyword id="KW-0050">Antiport</keyword>
<keyword id="KW-0997">Cell inner membrane</keyword>
<keyword id="KW-1003">Cell membrane</keyword>
<keyword id="KW-0406">Ion transport</keyword>
<keyword id="KW-0472">Membrane</keyword>
<keyword id="KW-0630">Potassium</keyword>
<keyword id="KW-0633">Potassium transport</keyword>
<keyword id="KW-0812">Transmembrane</keyword>
<keyword id="KW-1133">Transmembrane helix</keyword>
<keyword id="KW-0813">Transport</keyword>
<protein>
    <recommendedName>
        <fullName evidence="1">K(+)/H(+) antiporter NhaP2</fullName>
    </recommendedName>
    <alternativeName>
        <fullName evidence="1">Potassium/proton antiporter NhaP2</fullName>
    </alternativeName>
</protein>
<comment type="function">
    <text evidence="1">K(+)/H(+) antiporter that extrudes potassium in exchange for external protons and maintains the internal concentration of potassium under toxic levels.</text>
</comment>
<comment type="catalytic activity">
    <reaction evidence="1">
        <text>K(+)(in) + H(+)(out) = K(+)(out) + H(+)(in)</text>
        <dbReference type="Rhea" id="RHEA:29467"/>
        <dbReference type="ChEBI" id="CHEBI:15378"/>
        <dbReference type="ChEBI" id="CHEBI:29103"/>
    </reaction>
    <physiologicalReaction direction="left-to-right" evidence="1">
        <dbReference type="Rhea" id="RHEA:29468"/>
    </physiologicalReaction>
</comment>
<comment type="subcellular location">
    <subcellularLocation>
        <location evidence="1">Cell inner membrane</location>
        <topology evidence="1">Multi-pass membrane protein</topology>
    </subcellularLocation>
</comment>
<comment type="similarity">
    <text evidence="1">Belongs to the monovalent cation:proton antiporter 1 (CPA1) transporter (TC 2.A.36) family. NhaP2 subfamily.</text>
</comment>
<dbReference type="EMBL" id="CP000970">
    <property type="protein sequence ID" value="ACB19255.1"/>
    <property type="molecule type" value="Genomic_DNA"/>
</dbReference>
<dbReference type="RefSeq" id="WP_000340206.1">
    <property type="nucleotide sequence ID" value="NC_010498.1"/>
</dbReference>
<dbReference type="SMR" id="B1LHX5"/>
<dbReference type="KEGG" id="ecm:EcSMS35_1957"/>
<dbReference type="HOGENOM" id="CLU_005912_9_2_6"/>
<dbReference type="Proteomes" id="UP000007011">
    <property type="component" value="Chromosome"/>
</dbReference>
<dbReference type="GO" id="GO:0005886">
    <property type="term" value="C:plasma membrane"/>
    <property type="evidence" value="ECO:0007669"/>
    <property type="project" value="UniProtKB-SubCell"/>
</dbReference>
<dbReference type="GO" id="GO:0050660">
    <property type="term" value="F:flavin adenine dinucleotide binding"/>
    <property type="evidence" value="ECO:0007669"/>
    <property type="project" value="InterPro"/>
</dbReference>
<dbReference type="GO" id="GO:0015386">
    <property type="term" value="F:potassium:proton antiporter activity"/>
    <property type="evidence" value="ECO:0007669"/>
    <property type="project" value="UniProtKB-UniRule"/>
</dbReference>
<dbReference type="GO" id="GO:0006884">
    <property type="term" value="P:cell volume homeostasis"/>
    <property type="evidence" value="ECO:0007669"/>
    <property type="project" value="InterPro"/>
</dbReference>
<dbReference type="FunFam" id="1.20.1530.20:FF:000002">
    <property type="entry name" value="K(+)/H(+) antiporter NhaP2"/>
    <property type="match status" value="1"/>
</dbReference>
<dbReference type="FunFam" id="3.30.465.10:FF:000009">
    <property type="entry name" value="K(+)/H(+) antiporter NhaP2"/>
    <property type="match status" value="1"/>
</dbReference>
<dbReference type="FunFam" id="3.30.70.1450:FF:000007">
    <property type="entry name" value="K(+)/H(+) antiporter NhaP2"/>
    <property type="match status" value="1"/>
</dbReference>
<dbReference type="Gene3D" id="1.20.1530.20">
    <property type="match status" value="1"/>
</dbReference>
<dbReference type="Gene3D" id="3.30.465.10">
    <property type="match status" value="1"/>
</dbReference>
<dbReference type="Gene3D" id="3.30.70.1450">
    <property type="entry name" value="Regulator of K+ conductance, C-terminal domain"/>
    <property type="match status" value="1"/>
</dbReference>
<dbReference type="HAMAP" id="MF_01075">
    <property type="entry name" value="NhaP2"/>
    <property type="match status" value="1"/>
</dbReference>
<dbReference type="InterPro" id="IPR006153">
    <property type="entry name" value="Cation/H_exchanger_TM"/>
</dbReference>
<dbReference type="InterPro" id="IPR036318">
    <property type="entry name" value="FAD-bd_PCMH-like_sf"/>
</dbReference>
<dbReference type="InterPro" id="IPR016169">
    <property type="entry name" value="FAD-bd_PCMH_sub2"/>
</dbReference>
<dbReference type="InterPro" id="IPR038770">
    <property type="entry name" value="Na+/solute_symporter_sf"/>
</dbReference>
<dbReference type="InterPro" id="IPR023729">
    <property type="entry name" value="NhaP2"/>
</dbReference>
<dbReference type="InterPro" id="IPR006037">
    <property type="entry name" value="RCK_C"/>
</dbReference>
<dbReference type="InterPro" id="IPR036721">
    <property type="entry name" value="RCK_C_sf"/>
</dbReference>
<dbReference type="InterPro" id="IPR005170">
    <property type="entry name" value="Transptr-assoc_dom"/>
</dbReference>
<dbReference type="NCBIfam" id="NF003714">
    <property type="entry name" value="PRK05326.1-1"/>
    <property type="match status" value="1"/>
</dbReference>
<dbReference type="NCBIfam" id="NF003715">
    <property type="entry name" value="PRK05326.1-2"/>
    <property type="match status" value="1"/>
</dbReference>
<dbReference type="NCBIfam" id="NF003716">
    <property type="entry name" value="PRK05326.1-3"/>
    <property type="match status" value="1"/>
</dbReference>
<dbReference type="PANTHER" id="PTHR32507:SF7">
    <property type="entry name" value="K(+)_H(+) ANTIPORTER NHAP2"/>
    <property type="match status" value="1"/>
</dbReference>
<dbReference type="PANTHER" id="PTHR32507">
    <property type="entry name" value="NA(+)/H(+) ANTIPORTER 1"/>
    <property type="match status" value="1"/>
</dbReference>
<dbReference type="Pfam" id="PF03471">
    <property type="entry name" value="CorC_HlyC"/>
    <property type="match status" value="1"/>
</dbReference>
<dbReference type="Pfam" id="PF00999">
    <property type="entry name" value="Na_H_Exchanger"/>
    <property type="match status" value="1"/>
</dbReference>
<dbReference type="Pfam" id="PF02080">
    <property type="entry name" value="TrkA_C"/>
    <property type="match status" value="1"/>
</dbReference>
<dbReference type="SMART" id="SM01091">
    <property type="entry name" value="CorC_HlyC"/>
    <property type="match status" value="1"/>
</dbReference>
<dbReference type="SUPFAM" id="SSF56176">
    <property type="entry name" value="FAD-binding/transporter-associated domain-like"/>
    <property type="match status" value="1"/>
</dbReference>
<dbReference type="SUPFAM" id="SSF116726">
    <property type="entry name" value="TrkA C-terminal domain-like"/>
    <property type="match status" value="1"/>
</dbReference>
<dbReference type="PROSITE" id="PS51202">
    <property type="entry name" value="RCK_C"/>
    <property type="match status" value="1"/>
</dbReference>
<organism>
    <name type="scientific">Escherichia coli (strain SMS-3-5 / SECEC)</name>
    <dbReference type="NCBI Taxonomy" id="439855"/>
    <lineage>
        <taxon>Bacteria</taxon>
        <taxon>Pseudomonadati</taxon>
        <taxon>Pseudomonadota</taxon>
        <taxon>Gammaproteobacteria</taxon>
        <taxon>Enterobacterales</taxon>
        <taxon>Enterobacteriaceae</taxon>
        <taxon>Escherichia</taxon>
    </lineage>
</organism>